<accession>A8XEH1</accession>
<reference evidence="9" key="1">
    <citation type="journal article" date="2003" name="PLoS Biol.">
        <title>The genome sequence of Caenorhabditis briggsae: a platform for comparative genomics.</title>
        <authorList>
            <person name="Stein L.D."/>
            <person name="Bao Z."/>
            <person name="Blasiar D."/>
            <person name="Blumenthal T."/>
            <person name="Brent M.R."/>
            <person name="Chen N."/>
            <person name="Chinwalla A."/>
            <person name="Clarke L."/>
            <person name="Clee C."/>
            <person name="Coghlan A."/>
            <person name="Coulson A."/>
            <person name="D'Eustachio P."/>
            <person name="Fitch D.H.A."/>
            <person name="Fulton L.A."/>
            <person name="Fulton R.E."/>
            <person name="Griffiths-Jones S."/>
            <person name="Harris T.W."/>
            <person name="Hillier L.W."/>
            <person name="Kamath R."/>
            <person name="Kuwabara P.E."/>
            <person name="Mardis E.R."/>
            <person name="Marra M.A."/>
            <person name="Miner T.L."/>
            <person name="Minx P."/>
            <person name="Mullikin J.C."/>
            <person name="Plumb R.W."/>
            <person name="Rogers J."/>
            <person name="Schein J.E."/>
            <person name="Sohrmann M."/>
            <person name="Spieth J."/>
            <person name="Stajich J.E."/>
            <person name="Wei C."/>
            <person name="Willey D."/>
            <person name="Wilson R.K."/>
            <person name="Durbin R.M."/>
            <person name="Waterston R.H."/>
        </authorList>
    </citation>
    <scope>NUCLEOTIDE SEQUENCE [LARGE SCALE GENOMIC DNA]</scope>
    <source>
        <strain evidence="9">AF16</strain>
    </source>
</reference>
<reference evidence="8" key="2">
    <citation type="journal article" date="2008" name="Dev. Biol.">
        <title>Comparative analysis of embryonic cell lineage between Caenorhabditis briggsae and Caenorhabditis elegans.</title>
        <authorList>
            <person name="Zhao Z."/>
            <person name="Boyle T.J."/>
            <person name="Bao Z."/>
            <person name="Murray J.I."/>
            <person name="Mericle B."/>
            <person name="Waterston R.H."/>
        </authorList>
    </citation>
    <scope>IDENTIFICATION</scope>
</reference>
<proteinExistence type="inferred from homology"/>
<protein>
    <recommendedName>
        <fullName evidence="7 9">Abnormal cell lineage protein 44</fullName>
    </recommendedName>
    <alternativeName>
        <fullName evidence="7">Wnt protein</fullName>
    </alternativeName>
</protein>
<keyword id="KW-0217">Developmental protein</keyword>
<keyword id="KW-1015">Disulfide bond</keyword>
<keyword id="KW-0272">Extracellular matrix</keyword>
<keyword id="KW-0325">Glycoprotein</keyword>
<keyword id="KW-0449">Lipoprotein</keyword>
<keyword id="KW-1185">Reference proteome</keyword>
<keyword id="KW-0964">Secreted</keyword>
<keyword id="KW-0732">Signal</keyword>
<keyword id="KW-0879">Wnt signaling pathway</keyword>
<sequence length="341" mass="37831">MRALYFRTTTLSTFFILCSLASNDIPRTGGNKIVQPPKPNILKQGCPSDLLHSRALRSIQLACRSHPATVISAFEGIQEGLQNCANRLRFQQWDCSEAGNIMHDPPLLRQGFRESSLIWALSSASAAWGVATACAQGWIDDCACNNHMGQNEYEFGGCTHGVQHGITASRKLLTKVGAVNSLLRKVEKHNLKAGRLAIKKTLISSCKCHGVSGSCQQKTCWKRTATLEHITDYLVEKYARAKLYTDDSVVKTTDLIYLEASPDVCKVKSVAGRVCAWRNETHTQGDCDRLCCGNGFSIRHEVVRVKCDCEFVWCCNLVCKDCIQHRWISTCNGTPPKSLIF</sequence>
<comment type="function">
    <text evidence="5">Ligand for members of the frizzled family of seven transmembrane receptors (By similarity). Affects male tail development, vulval precursor cell specification and egg laying. Involved in morphogenesis by influencing polarity of asymmetric cell divisions of the B, U, and F cells in the male, and the T cell in males and hermaphrodites. Controls spindle orientation in B-gamma cell division during male copulatory spicule development. Involved in specification of the P7.p lineage during vulval development. Has a role in providing polarity and default lin-17 localization in axon development and positioning of neuromuscular synapses in DA9 regions by negatively regulating synaptogenesis (By similarity).</text>
</comment>
<comment type="subcellular location">
    <subcellularLocation>
        <location evidence="1">Secreted</location>
        <location evidence="1">Extracellular space</location>
        <location evidence="1">Extracellular matrix</location>
    </subcellularLocation>
</comment>
<comment type="PTM">
    <text evidence="2 4">Palmitoleoylation is required for efficient binding to frizzled receptors. Depalmitoleoylation leads to Wnt signaling pathway inhibition.</text>
</comment>
<comment type="similarity">
    <text evidence="6">Belongs to the Wnt family.</text>
</comment>
<name>LIN44_CAEBR</name>
<evidence type="ECO:0000250" key="1">
    <source>
        <dbReference type="UniProtKB" id="P24383"/>
    </source>
</evidence>
<evidence type="ECO:0000250" key="2">
    <source>
        <dbReference type="UniProtKB" id="P27467"/>
    </source>
</evidence>
<evidence type="ECO:0000250" key="3">
    <source>
        <dbReference type="UniProtKB" id="P28026"/>
    </source>
</evidence>
<evidence type="ECO:0000250" key="4">
    <source>
        <dbReference type="UniProtKB" id="P56704"/>
    </source>
</evidence>
<evidence type="ECO:0000250" key="5">
    <source>
        <dbReference type="UniProtKB" id="Q27886"/>
    </source>
</evidence>
<evidence type="ECO:0000255" key="6"/>
<evidence type="ECO:0000303" key="7">
    <source>
    </source>
</evidence>
<evidence type="ECO:0000305" key="8"/>
<evidence type="ECO:0000312" key="9">
    <source>
        <dbReference type="EMBL" id="CAP31106.2"/>
    </source>
</evidence>
<evidence type="ECO:0000312" key="10">
    <source>
        <dbReference type="WormBase" id="CBG12066"/>
    </source>
</evidence>
<gene>
    <name evidence="9 10" type="primary">lin-44</name>
    <name type="ORF">CBG12066</name>
</gene>
<organism>
    <name type="scientific">Caenorhabditis briggsae</name>
    <dbReference type="NCBI Taxonomy" id="6238"/>
    <lineage>
        <taxon>Eukaryota</taxon>
        <taxon>Metazoa</taxon>
        <taxon>Ecdysozoa</taxon>
        <taxon>Nematoda</taxon>
        <taxon>Chromadorea</taxon>
        <taxon>Rhabditida</taxon>
        <taxon>Rhabditina</taxon>
        <taxon>Rhabditomorpha</taxon>
        <taxon>Rhabditoidea</taxon>
        <taxon>Rhabditidae</taxon>
        <taxon>Peloderinae</taxon>
        <taxon>Caenorhabditis</taxon>
    </lineage>
</organism>
<feature type="signal peptide" evidence="6">
    <location>
        <begin position="1"/>
        <end position="21"/>
    </location>
</feature>
<feature type="chain" id="PRO_0000403172" description="Abnormal cell lineage protein 44" evidence="6">
    <location>
        <begin position="22"/>
        <end position="341"/>
    </location>
</feature>
<feature type="lipid moiety-binding region" description="O-palmitoleoyl serine; by mom-1" evidence="4">
    <location>
        <position position="212"/>
    </location>
</feature>
<feature type="glycosylation site" description="N-linked (GlcNAc...) asparagine" evidence="6">
    <location>
        <position position="279"/>
    </location>
</feature>
<feature type="disulfide bond" evidence="3">
    <location>
        <begin position="84"/>
        <end position="95"/>
    </location>
</feature>
<feature type="disulfide bond" evidence="3">
    <location>
        <begin position="134"/>
        <end position="142"/>
    </location>
</feature>
<feature type="disulfide bond" evidence="3">
    <location>
        <begin position="144"/>
        <end position="158"/>
    </location>
</feature>
<feature type="disulfide bond" evidence="3">
    <location>
        <begin position="206"/>
        <end position="220"/>
    </location>
</feature>
<feature type="disulfide bond" evidence="3">
    <location>
        <begin position="208"/>
        <end position="215"/>
    </location>
</feature>
<feature type="disulfide bond" evidence="3">
    <location>
        <begin position="265"/>
        <end position="292"/>
    </location>
</feature>
<feature type="disulfide bond" evidence="3">
    <location>
        <begin position="275"/>
        <end position="287"/>
    </location>
</feature>
<feature type="disulfide bond" evidence="3">
    <location>
        <begin position="291"/>
        <end position="331"/>
    </location>
</feature>
<feature type="disulfide bond" evidence="3">
    <location>
        <begin position="307"/>
        <end position="322"/>
    </location>
</feature>
<feature type="disulfide bond" evidence="3">
    <location>
        <begin position="309"/>
        <end position="319"/>
    </location>
</feature>
<feature type="disulfide bond" evidence="3">
    <location>
        <begin position="314"/>
        <end position="315"/>
    </location>
</feature>
<dbReference type="EMBL" id="HE601540">
    <property type="protein sequence ID" value="CAP31106.2"/>
    <property type="molecule type" value="Genomic_DNA"/>
</dbReference>
<dbReference type="SMR" id="A8XEH1"/>
<dbReference type="FunCoup" id="A8XEH1">
    <property type="interactions" value="149"/>
</dbReference>
<dbReference type="STRING" id="6238.A8XEH1"/>
<dbReference type="GlyCosmos" id="A8XEH1">
    <property type="glycosylation" value="1 site, No reported glycans"/>
</dbReference>
<dbReference type="EnsemblMetazoa" id="CBG12066.1">
    <property type="protein sequence ID" value="CBG12066.1"/>
    <property type="gene ID" value="WBGene00033074"/>
</dbReference>
<dbReference type="WormBase" id="CBG12066">
    <property type="protein sequence ID" value="CBP33782"/>
    <property type="gene ID" value="WBGene00033074"/>
    <property type="gene designation" value="Cbr-lin-44"/>
</dbReference>
<dbReference type="eggNOG" id="KOG3913">
    <property type="taxonomic scope" value="Eukaryota"/>
</dbReference>
<dbReference type="HOGENOM" id="CLU_033039_1_0_1"/>
<dbReference type="InParanoid" id="A8XEH1"/>
<dbReference type="OMA" id="ESAYLWA"/>
<dbReference type="OrthoDB" id="5945655at2759"/>
<dbReference type="Proteomes" id="UP000008549">
    <property type="component" value="Unassembled WGS sequence"/>
</dbReference>
<dbReference type="GO" id="GO:0005615">
    <property type="term" value="C:extracellular space"/>
    <property type="evidence" value="ECO:0000318"/>
    <property type="project" value="GO_Central"/>
</dbReference>
<dbReference type="GO" id="GO:0005125">
    <property type="term" value="F:cytokine activity"/>
    <property type="evidence" value="ECO:0000318"/>
    <property type="project" value="GO_Central"/>
</dbReference>
<dbReference type="GO" id="GO:0005109">
    <property type="term" value="F:frizzled binding"/>
    <property type="evidence" value="ECO:0000318"/>
    <property type="project" value="GO_Central"/>
</dbReference>
<dbReference type="GO" id="GO:0008356">
    <property type="term" value="P:asymmetric cell division"/>
    <property type="evidence" value="ECO:0007669"/>
    <property type="project" value="EnsemblMetazoa"/>
</dbReference>
<dbReference type="GO" id="GO:0060070">
    <property type="term" value="P:canonical Wnt signaling pathway"/>
    <property type="evidence" value="ECO:0000318"/>
    <property type="project" value="GO_Central"/>
</dbReference>
<dbReference type="GO" id="GO:0045165">
    <property type="term" value="P:cell fate commitment"/>
    <property type="evidence" value="ECO:0000318"/>
    <property type="project" value="GO_Central"/>
</dbReference>
<dbReference type="GO" id="GO:0060573">
    <property type="term" value="P:cell fate specification involved in pattern specification"/>
    <property type="evidence" value="ECO:0007669"/>
    <property type="project" value="EnsemblMetazoa"/>
</dbReference>
<dbReference type="GO" id="GO:0007163">
    <property type="term" value="P:establishment or maintenance of cell polarity"/>
    <property type="evidence" value="ECO:0007669"/>
    <property type="project" value="EnsemblMetazoa"/>
</dbReference>
<dbReference type="GO" id="GO:1904936">
    <property type="term" value="P:interneuron migration"/>
    <property type="evidence" value="ECO:0007669"/>
    <property type="project" value="EnsemblMetazoa"/>
</dbReference>
<dbReference type="GO" id="GO:0097475">
    <property type="term" value="P:motor neuron migration"/>
    <property type="evidence" value="ECO:0007669"/>
    <property type="project" value="EnsemblMetazoa"/>
</dbReference>
<dbReference type="GO" id="GO:0045138">
    <property type="term" value="P:nematode male tail tip morphogenesis"/>
    <property type="evidence" value="ECO:0007669"/>
    <property type="project" value="EnsemblMetazoa"/>
</dbReference>
<dbReference type="GO" id="GO:0097402">
    <property type="term" value="P:neuroblast migration"/>
    <property type="evidence" value="ECO:0007669"/>
    <property type="project" value="EnsemblMetazoa"/>
</dbReference>
<dbReference type="GO" id="GO:0030182">
    <property type="term" value="P:neuron differentiation"/>
    <property type="evidence" value="ECO:0000318"/>
    <property type="project" value="GO_Central"/>
</dbReference>
<dbReference type="GO" id="GO:0045724">
    <property type="term" value="P:positive regulation of cilium assembly"/>
    <property type="evidence" value="ECO:0007669"/>
    <property type="project" value="EnsemblMetazoa"/>
</dbReference>
<dbReference type="GO" id="GO:0050775">
    <property type="term" value="P:positive regulation of dendrite morphogenesis"/>
    <property type="evidence" value="ECO:0007669"/>
    <property type="project" value="EnsemblMetazoa"/>
</dbReference>
<dbReference type="GO" id="GO:1905485">
    <property type="term" value="P:positive regulation of motor neuron migration"/>
    <property type="evidence" value="ECO:0007669"/>
    <property type="project" value="EnsemblMetazoa"/>
</dbReference>
<dbReference type="GO" id="GO:0010623">
    <property type="term" value="P:programmed cell death involved in cell development"/>
    <property type="evidence" value="ECO:0007669"/>
    <property type="project" value="EnsemblMetazoa"/>
</dbReference>
<dbReference type="GO" id="GO:0046662">
    <property type="term" value="P:regulation of egg-laying behavior"/>
    <property type="evidence" value="ECO:0007669"/>
    <property type="project" value="EnsemblMetazoa"/>
</dbReference>
<dbReference type="GO" id="GO:0040028">
    <property type="term" value="P:regulation of vulval development"/>
    <property type="evidence" value="ECO:0007669"/>
    <property type="project" value="EnsemblMetazoa"/>
</dbReference>
<dbReference type="GO" id="GO:0040025">
    <property type="term" value="P:vulval development"/>
    <property type="evidence" value="ECO:0007669"/>
    <property type="project" value="EnsemblMetazoa"/>
</dbReference>
<dbReference type="CDD" id="cd13113">
    <property type="entry name" value="Wnt"/>
    <property type="match status" value="1"/>
</dbReference>
<dbReference type="FunFam" id="3.30.2460.20:FF:000005">
    <property type="entry name" value="Protein Wnt"/>
    <property type="match status" value="1"/>
</dbReference>
<dbReference type="Gene3D" id="3.30.2460.20">
    <property type="match status" value="1"/>
</dbReference>
<dbReference type="InterPro" id="IPR005817">
    <property type="entry name" value="Wnt"/>
</dbReference>
<dbReference type="InterPro" id="IPR043158">
    <property type="entry name" value="Wnt_C"/>
</dbReference>
<dbReference type="InterPro" id="IPR018161">
    <property type="entry name" value="Wnt_CS"/>
</dbReference>
<dbReference type="PANTHER" id="PTHR12027:SF116">
    <property type="entry name" value="ABNORMAL CELL LINEAGE PROTEIN 44"/>
    <property type="match status" value="1"/>
</dbReference>
<dbReference type="PANTHER" id="PTHR12027">
    <property type="entry name" value="WNT RELATED"/>
    <property type="match status" value="1"/>
</dbReference>
<dbReference type="Pfam" id="PF00110">
    <property type="entry name" value="wnt"/>
    <property type="match status" value="1"/>
</dbReference>
<dbReference type="PRINTS" id="PR01349">
    <property type="entry name" value="WNTPROTEIN"/>
</dbReference>
<dbReference type="SMART" id="SM00097">
    <property type="entry name" value="WNT1"/>
    <property type="match status" value="1"/>
</dbReference>
<dbReference type="PROSITE" id="PS00246">
    <property type="entry name" value="WNT1"/>
    <property type="match status" value="1"/>
</dbReference>